<comment type="catalytic activity">
    <reaction>
        <text>S-adenosyl-L-methionine + a thiopurine = S-adenosyl-L-homocysteine + a thiopurine S-methylether.</text>
        <dbReference type="EC" id="2.1.1.67"/>
    </reaction>
</comment>
<comment type="subcellular location">
    <subcellularLocation>
        <location evidence="1">Cytoplasm</location>
    </subcellularLocation>
</comment>
<comment type="similarity">
    <text evidence="2">Belongs to the class I-like SAM-binding methyltransferase superfamily. TPMT family.</text>
</comment>
<organism>
    <name type="scientific">Yarrowia lipolytica (strain CLIB 122 / E 150)</name>
    <name type="common">Yeast</name>
    <name type="synonym">Candida lipolytica</name>
    <dbReference type="NCBI Taxonomy" id="284591"/>
    <lineage>
        <taxon>Eukaryota</taxon>
        <taxon>Fungi</taxon>
        <taxon>Dikarya</taxon>
        <taxon>Ascomycota</taxon>
        <taxon>Saccharomycotina</taxon>
        <taxon>Dipodascomycetes</taxon>
        <taxon>Dipodascales</taxon>
        <taxon>Dipodascales incertae sedis</taxon>
        <taxon>Yarrowia</taxon>
    </lineage>
</organism>
<keyword id="KW-0963">Cytoplasm</keyword>
<keyword id="KW-0489">Methyltransferase</keyword>
<keyword id="KW-1185">Reference proteome</keyword>
<keyword id="KW-0949">S-adenosyl-L-methionine</keyword>
<keyword id="KW-0808">Transferase</keyword>
<feature type="chain" id="PRO_0000220114" description="Probable thiopurine S-methyltransferase">
    <location>
        <begin position="1"/>
        <end position="213"/>
    </location>
</feature>
<feature type="binding site" evidence="1">
    <location>
        <position position="10"/>
    </location>
    <ligand>
        <name>S-adenosyl-L-methionine</name>
        <dbReference type="ChEBI" id="CHEBI:59789"/>
    </ligand>
</feature>
<feature type="binding site" evidence="1">
    <location>
        <position position="45"/>
    </location>
    <ligand>
        <name>S-adenosyl-L-methionine</name>
        <dbReference type="ChEBI" id="CHEBI:59789"/>
    </ligand>
</feature>
<feature type="binding site" evidence="1">
    <location>
        <position position="66"/>
    </location>
    <ligand>
        <name>S-adenosyl-L-methionine</name>
        <dbReference type="ChEBI" id="CHEBI:59789"/>
    </ligand>
</feature>
<feature type="binding site" evidence="1">
    <location>
        <position position="125"/>
    </location>
    <ligand>
        <name>S-adenosyl-L-methionine</name>
        <dbReference type="ChEBI" id="CHEBI:59789"/>
    </ligand>
</feature>
<reference key="1">
    <citation type="journal article" date="2004" name="Nature">
        <title>Genome evolution in yeasts.</title>
        <authorList>
            <person name="Dujon B."/>
            <person name="Sherman D."/>
            <person name="Fischer G."/>
            <person name="Durrens P."/>
            <person name="Casaregola S."/>
            <person name="Lafontaine I."/>
            <person name="de Montigny J."/>
            <person name="Marck C."/>
            <person name="Neuveglise C."/>
            <person name="Talla E."/>
            <person name="Goffard N."/>
            <person name="Frangeul L."/>
            <person name="Aigle M."/>
            <person name="Anthouard V."/>
            <person name="Babour A."/>
            <person name="Barbe V."/>
            <person name="Barnay S."/>
            <person name="Blanchin S."/>
            <person name="Beckerich J.-M."/>
            <person name="Beyne E."/>
            <person name="Bleykasten C."/>
            <person name="Boisrame A."/>
            <person name="Boyer J."/>
            <person name="Cattolico L."/>
            <person name="Confanioleri F."/>
            <person name="de Daruvar A."/>
            <person name="Despons L."/>
            <person name="Fabre E."/>
            <person name="Fairhead C."/>
            <person name="Ferry-Dumazet H."/>
            <person name="Groppi A."/>
            <person name="Hantraye F."/>
            <person name="Hennequin C."/>
            <person name="Jauniaux N."/>
            <person name="Joyet P."/>
            <person name="Kachouri R."/>
            <person name="Kerrest A."/>
            <person name="Koszul R."/>
            <person name="Lemaire M."/>
            <person name="Lesur I."/>
            <person name="Ma L."/>
            <person name="Muller H."/>
            <person name="Nicaud J.-M."/>
            <person name="Nikolski M."/>
            <person name="Oztas S."/>
            <person name="Ozier-Kalogeropoulos O."/>
            <person name="Pellenz S."/>
            <person name="Potier S."/>
            <person name="Richard G.-F."/>
            <person name="Straub M.-L."/>
            <person name="Suleau A."/>
            <person name="Swennen D."/>
            <person name="Tekaia F."/>
            <person name="Wesolowski-Louvel M."/>
            <person name="Westhof E."/>
            <person name="Wirth B."/>
            <person name="Zeniou-Meyer M."/>
            <person name="Zivanovic Y."/>
            <person name="Bolotin-Fukuhara M."/>
            <person name="Thierry A."/>
            <person name="Bouchier C."/>
            <person name="Caudron B."/>
            <person name="Scarpelli C."/>
            <person name="Gaillardin C."/>
            <person name="Weissenbach J."/>
            <person name="Wincker P."/>
            <person name="Souciet J.-L."/>
        </authorList>
    </citation>
    <scope>NUCLEOTIDE SEQUENCE [LARGE SCALE GENOMIC DNA]</scope>
    <source>
        <strain>CLIB 122 / E 150</strain>
    </source>
</reference>
<name>TPMT_YARLI</name>
<sequence length="213" mass="24355">MKPEFWQDRWNKDQIGWHQKSANPHLVKYWPTLNISQGSTVIVPLCGKSLDMRWLEGLGYNVLGVELSEKACKQYFDQMELEPKVSKNASGKFTIYEAGNTQIWCGDLFDLDADDVKYVSALYDRASVIALPPDMRERYAAHLGALIPDPQGLIITLDYDQSKMNGPPHAVSDAEVQRLFGTNWKLTLLEEVDKKDMFKEEGIEPVERVYKLN</sequence>
<dbReference type="EC" id="2.1.1.67"/>
<dbReference type="EMBL" id="CR382131">
    <property type="protein sequence ID" value="CAG79167.1"/>
    <property type="molecule type" value="Genomic_DNA"/>
</dbReference>
<dbReference type="RefSeq" id="XP_503586.1">
    <property type="nucleotide sequence ID" value="XM_503586.1"/>
</dbReference>
<dbReference type="SMR" id="Q6C6X6"/>
<dbReference type="STRING" id="284591.Q6C6X6"/>
<dbReference type="EnsemblFungi" id="CAG79167">
    <property type="protein sequence ID" value="CAG79167"/>
    <property type="gene ID" value="YALI0_E05467g"/>
</dbReference>
<dbReference type="KEGG" id="yli:2912317"/>
<dbReference type="VEuPathDB" id="FungiDB:YALI0_E05467g"/>
<dbReference type="HOGENOM" id="CLU_085515_1_0_1"/>
<dbReference type="InParanoid" id="Q6C6X6"/>
<dbReference type="OMA" id="LWCGDFF"/>
<dbReference type="OrthoDB" id="103455at4891"/>
<dbReference type="Proteomes" id="UP000001300">
    <property type="component" value="Chromosome E"/>
</dbReference>
<dbReference type="GO" id="GO:0005737">
    <property type="term" value="C:cytoplasm"/>
    <property type="evidence" value="ECO:0007669"/>
    <property type="project" value="UniProtKB-SubCell"/>
</dbReference>
<dbReference type="GO" id="GO:0008119">
    <property type="term" value="F:thiopurine S-methyltransferase activity"/>
    <property type="evidence" value="ECO:0000318"/>
    <property type="project" value="GO_Central"/>
</dbReference>
<dbReference type="GO" id="GO:0032259">
    <property type="term" value="P:methylation"/>
    <property type="evidence" value="ECO:0007669"/>
    <property type="project" value="UniProtKB-KW"/>
</dbReference>
<dbReference type="GO" id="GO:0010038">
    <property type="term" value="P:response to metal ion"/>
    <property type="evidence" value="ECO:0007669"/>
    <property type="project" value="InterPro"/>
</dbReference>
<dbReference type="FunFam" id="3.40.50.150:FF:000101">
    <property type="entry name" value="Thiopurine S-methyltransferase"/>
    <property type="match status" value="1"/>
</dbReference>
<dbReference type="Gene3D" id="3.40.50.150">
    <property type="entry name" value="Vaccinia Virus protein VP39"/>
    <property type="match status" value="1"/>
</dbReference>
<dbReference type="HAMAP" id="MF_00812">
    <property type="entry name" value="Thiopur_methtran"/>
    <property type="match status" value="1"/>
</dbReference>
<dbReference type="InterPro" id="IPR029063">
    <property type="entry name" value="SAM-dependent_MTases_sf"/>
</dbReference>
<dbReference type="InterPro" id="IPR022474">
    <property type="entry name" value="Thiopur_S-MeTfrase_Se/Te_detox"/>
</dbReference>
<dbReference type="InterPro" id="IPR025835">
    <property type="entry name" value="Thiopurine_S-MeTrfase"/>
</dbReference>
<dbReference type="InterPro" id="IPR008854">
    <property type="entry name" value="TPMT"/>
</dbReference>
<dbReference type="NCBIfam" id="NF009732">
    <property type="entry name" value="PRK13255.1"/>
    <property type="match status" value="1"/>
</dbReference>
<dbReference type="NCBIfam" id="TIGR03840">
    <property type="entry name" value="TMPT_Se_Te"/>
    <property type="match status" value="1"/>
</dbReference>
<dbReference type="PANTHER" id="PTHR10259">
    <property type="entry name" value="THIOPURINE S-METHYLTRANSFERASE"/>
    <property type="match status" value="1"/>
</dbReference>
<dbReference type="PANTHER" id="PTHR10259:SF11">
    <property type="entry name" value="THIOPURINE S-METHYLTRANSFERASE"/>
    <property type="match status" value="1"/>
</dbReference>
<dbReference type="Pfam" id="PF05724">
    <property type="entry name" value="TPMT"/>
    <property type="match status" value="1"/>
</dbReference>
<dbReference type="PIRSF" id="PIRSF023956">
    <property type="entry name" value="Thiopurine_S-methyltransferase"/>
    <property type="match status" value="1"/>
</dbReference>
<dbReference type="SUPFAM" id="SSF53335">
    <property type="entry name" value="S-adenosyl-L-methionine-dependent methyltransferases"/>
    <property type="match status" value="1"/>
</dbReference>
<dbReference type="PROSITE" id="PS51585">
    <property type="entry name" value="SAM_MT_TPMT"/>
    <property type="match status" value="1"/>
</dbReference>
<protein>
    <recommendedName>
        <fullName>Probable thiopurine S-methyltransferase</fullName>
        <shortName>Thiopurine methyltransferase</shortName>
        <ecNumber>2.1.1.67</ecNumber>
    </recommendedName>
</protein>
<evidence type="ECO:0000250" key="1"/>
<evidence type="ECO:0000305" key="2"/>
<accession>Q6C6X6</accession>
<gene>
    <name type="ordered locus">YALI0E05467g</name>
</gene>
<proteinExistence type="inferred from homology"/>